<protein>
    <recommendedName>
        <fullName evidence="1">Hydroxyethylthiazole kinase</fullName>
        <ecNumber evidence="1">2.7.1.50</ecNumber>
    </recommendedName>
    <alternativeName>
        <fullName evidence="1">4-methyl-5-beta-hydroxyethylthiazole kinase</fullName>
        <shortName evidence="1">TH kinase</shortName>
        <shortName evidence="1">Thz kinase</shortName>
    </alternativeName>
</protein>
<dbReference type="EC" id="2.7.1.50" evidence="1"/>
<dbReference type="EMBL" id="CP000527">
    <property type="protein sequence ID" value="ABM27920.1"/>
    <property type="molecule type" value="Genomic_DNA"/>
</dbReference>
<dbReference type="RefSeq" id="WP_011791914.1">
    <property type="nucleotide sequence ID" value="NC_008751.1"/>
</dbReference>
<dbReference type="SMR" id="A1VBV4"/>
<dbReference type="KEGG" id="dvl:Dvul_0899"/>
<dbReference type="HOGENOM" id="CLU_019943_0_1_7"/>
<dbReference type="UniPathway" id="UPA00060">
    <property type="reaction ID" value="UER00139"/>
</dbReference>
<dbReference type="Proteomes" id="UP000009173">
    <property type="component" value="Chromosome"/>
</dbReference>
<dbReference type="GO" id="GO:0005524">
    <property type="term" value="F:ATP binding"/>
    <property type="evidence" value="ECO:0007669"/>
    <property type="project" value="UniProtKB-UniRule"/>
</dbReference>
<dbReference type="GO" id="GO:0004417">
    <property type="term" value="F:hydroxyethylthiazole kinase activity"/>
    <property type="evidence" value="ECO:0007669"/>
    <property type="project" value="UniProtKB-UniRule"/>
</dbReference>
<dbReference type="GO" id="GO:0000287">
    <property type="term" value="F:magnesium ion binding"/>
    <property type="evidence" value="ECO:0007669"/>
    <property type="project" value="UniProtKB-UniRule"/>
</dbReference>
<dbReference type="GO" id="GO:0009228">
    <property type="term" value="P:thiamine biosynthetic process"/>
    <property type="evidence" value="ECO:0007669"/>
    <property type="project" value="UniProtKB-KW"/>
</dbReference>
<dbReference type="GO" id="GO:0009229">
    <property type="term" value="P:thiamine diphosphate biosynthetic process"/>
    <property type="evidence" value="ECO:0007669"/>
    <property type="project" value="UniProtKB-UniRule"/>
</dbReference>
<dbReference type="CDD" id="cd01170">
    <property type="entry name" value="THZ_kinase"/>
    <property type="match status" value="1"/>
</dbReference>
<dbReference type="Gene3D" id="3.40.1190.20">
    <property type="match status" value="1"/>
</dbReference>
<dbReference type="HAMAP" id="MF_00228">
    <property type="entry name" value="Thz_kinase"/>
    <property type="match status" value="1"/>
</dbReference>
<dbReference type="InterPro" id="IPR000417">
    <property type="entry name" value="Hyethyz_kinase"/>
</dbReference>
<dbReference type="InterPro" id="IPR029056">
    <property type="entry name" value="Ribokinase-like"/>
</dbReference>
<dbReference type="NCBIfam" id="NF006830">
    <property type="entry name" value="PRK09355.1"/>
    <property type="match status" value="1"/>
</dbReference>
<dbReference type="NCBIfam" id="TIGR00694">
    <property type="entry name" value="thiM"/>
    <property type="match status" value="1"/>
</dbReference>
<dbReference type="Pfam" id="PF02110">
    <property type="entry name" value="HK"/>
    <property type="match status" value="1"/>
</dbReference>
<dbReference type="PIRSF" id="PIRSF000513">
    <property type="entry name" value="Thz_kinase"/>
    <property type="match status" value="1"/>
</dbReference>
<dbReference type="PRINTS" id="PR01099">
    <property type="entry name" value="HYETHTZKNASE"/>
</dbReference>
<dbReference type="SUPFAM" id="SSF53613">
    <property type="entry name" value="Ribokinase-like"/>
    <property type="match status" value="1"/>
</dbReference>
<name>THIM_NITV4</name>
<accession>A1VBV4</accession>
<gene>
    <name evidence="1" type="primary">thiM</name>
    <name type="ordered locus">Dvul_0899</name>
</gene>
<proteinExistence type="inferred from homology"/>
<keyword id="KW-0067">ATP-binding</keyword>
<keyword id="KW-0418">Kinase</keyword>
<keyword id="KW-0460">Magnesium</keyword>
<keyword id="KW-0479">Metal-binding</keyword>
<keyword id="KW-0547">Nucleotide-binding</keyword>
<keyword id="KW-0784">Thiamine biosynthesis</keyword>
<keyword id="KW-0808">Transferase</keyword>
<comment type="function">
    <text evidence="1">Catalyzes the phosphorylation of the hydroxyl group of 4-methyl-5-beta-hydroxyethylthiazole (THZ).</text>
</comment>
<comment type="catalytic activity">
    <reaction evidence="1">
        <text>5-(2-hydroxyethyl)-4-methylthiazole + ATP = 4-methyl-5-(2-phosphooxyethyl)-thiazole + ADP + H(+)</text>
        <dbReference type="Rhea" id="RHEA:24212"/>
        <dbReference type="ChEBI" id="CHEBI:15378"/>
        <dbReference type="ChEBI" id="CHEBI:17957"/>
        <dbReference type="ChEBI" id="CHEBI:30616"/>
        <dbReference type="ChEBI" id="CHEBI:58296"/>
        <dbReference type="ChEBI" id="CHEBI:456216"/>
        <dbReference type="EC" id="2.7.1.50"/>
    </reaction>
</comment>
<comment type="cofactor">
    <cofactor evidence="1">
        <name>Mg(2+)</name>
        <dbReference type="ChEBI" id="CHEBI:18420"/>
    </cofactor>
</comment>
<comment type="pathway">
    <text evidence="1">Cofactor biosynthesis; thiamine diphosphate biosynthesis; 4-methyl-5-(2-phosphoethyl)-thiazole from 5-(2-hydroxyethyl)-4-methylthiazole: step 1/1.</text>
</comment>
<comment type="similarity">
    <text evidence="1">Belongs to the Thz kinase family.</text>
</comment>
<feature type="chain" id="PRO_0000383856" description="Hydroxyethylthiazole kinase">
    <location>
        <begin position="1"/>
        <end position="267"/>
    </location>
</feature>
<feature type="binding site" evidence="1">
    <location>
        <position position="46"/>
    </location>
    <ligand>
        <name>substrate</name>
    </ligand>
</feature>
<feature type="binding site" evidence="1">
    <location>
        <position position="122"/>
    </location>
    <ligand>
        <name>ATP</name>
        <dbReference type="ChEBI" id="CHEBI:30616"/>
    </ligand>
</feature>
<feature type="binding site" evidence="1">
    <location>
        <position position="168"/>
    </location>
    <ligand>
        <name>ATP</name>
        <dbReference type="ChEBI" id="CHEBI:30616"/>
    </ligand>
</feature>
<feature type="binding site" evidence="1">
    <location>
        <position position="195"/>
    </location>
    <ligand>
        <name>substrate</name>
    </ligand>
</feature>
<sequence>MFSTGTVWKNVAAVRQRAPIIHSITNFVVMNTTANALLAAGASPIMAHAPEEMAEMAGIASALVLNIGTLTKPWVESMMLAGMAARERRLPVVLDPVGAGASSLRTTTALEILEKVRPAVVRGNGSEILALAGAAGDTRGVDSARTAHEAVDGARALARRYGAVVVVSGAEDVVTDGDALWLVRGGSPLMPRVTGMGCTATVLVAAHVAVAADVLEGAVTGMAAMSAAGALAARRSQGPGSFQVAFLDVLHSLDLVTVRDEVEVVRA</sequence>
<organism>
    <name type="scientific">Nitratidesulfovibrio vulgaris (strain DP4)</name>
    <name type="common">Desulfovibrio vulgaris</name>
    <dbReference type="NCBI Taxonomy" id="391774"/>
    <lineage>
        <taxon>Bacteria</taxon>
        <taxon>Pseudomonadati</taxon>
        <taxon>Thermodesulfobacteriota</taxon>
        <taxon>Desulfovibrionia</taxon>
        <taxon>Desulfovibrionales</taxon>
        <taxon>Desulfovibrionaceae</taxon>
        <taxon>Nitratidesulfovibrio</taxon>
    </lineage>
</organism>
<evidence type="ECO:0000255" key="1">
    <source>
        <dbReference type="HAMAP-Rule" id="MF_00228"/>
    </source>
</evidence>
<reference key="1">
    <citation type="journal article" date="2009" name="Environ. Microbiol.">
        <title>Contribution of mobile genetic elements to Desulfovibrio vulgaris genome plasticity.</title>
        <authorList>
            <person name="Walker C.B."/>
            <person name="Stolyar S."/>
            <person name="Chivian D."/>
            <person name="Pinel N."/>
            <person name="Gabster J.A."/>
            <person name="Dehal P.S."/>
            <person name="He Z."/>
            <person name="Yang Z.K."/>
            <person name="Yen H.C."/>
            <person name="Zhou J."/>
            <person name="Wall J.D."/>
            <person name="Hazen T.C."/>
            <person name="Arkin A.P."/>
            <person name="Stahl D.A."/>
        </authorList>
    </citation>
    <scope>NUCLEOTIDE SEQUENCE [LARGE SCALE GENOMIC DNA]</scope>
    <source>
        <strain>DP4</strain>
    </source>
</reference>